<keyword id="KW-0963">Cytoplasm</keyword>
<keyword id="KW-0489">Methyltransferase</keyword>
<keyword id="KW-0694">RNA-binding</keyword>
<keyword id="KW-0698">rRNA processing</keyword>
<keyword id="KW-0949">S-adenosyl-L-methionine</keyword>
<keyword id="KW-0808">Transferase</keyword>
<feature type="chain" id="PRO_0000366187" description="Ribosomal RNA small subunit methyltransferase B">
    <location>
        <begin position="1"/>
        <end position="429"/>
    </location>
</feature>
<feature type="active site" description="Nucleophile" evidence="1">
    <location>
        <position position="375"/>
    </location>
</feature>
<feature type="binding site" evidence="1">
    <location>
        <begin position="254"/>
        <end position="260"/>
    </location>
    <ligand>
        <name>S-adenosyl-L-methionine</name>
        <dbReference type="ChEBI" id="CHEBI:59789"/>
    </ligand>
</feature>
<feature type="binding site" evidence="1">
    <location>
        <position position="277"/>
    </location>
    <ligand>
        <name>S-adenosyl-L-methionine</name>
        <dbReference type="ChEBI" id="CHEBI:59789"/>
    </ligand>
</feature>
<feature type="binding site" evidence="1">
    <location>
        <position position="303"/>
    </location>
    <ligand>
        <name>S-adenosyl-L-methionine</name>
        <dbReference type="ChEBI" id="CHEBI:59789"/>
    </ligand>
</feature>
<feature type="binding site" evidence="1">
    <location>
        <position position="322"/>
    </location>
    <ligand>
        <name>S-adenosyl-L-methionine</name>
        <dbReference type="ChEBI" id="CHEBI:59789"/>
    </ligand>
</feature>
<comment type="function">
    <text evidence="1">Specifically methylates the cytosine at position 967 (m5C967) of 16S rRNA.</text>
</comment>
<comment type="catalytic activity">
    <reaction evidence="1">
        <text>cytidine(967) in 16S rRNA + S-adenosyl-L-methionine = 5-methylcytidine(967) in 16S rRNA + S-adenosyl-L-homocysteine + H(+)</text>
        <dbReference type="Rhea" id="RHEA:42748"/>
        <dbReference type="Rhea" id="RHEA-COMP:10219"/>
        <dbReference type="Rhea" id="RHEA-COMP:10220"/>
        <dbReference type="ChEBI" id="CHEBI:15378"/>
        <dbReference type="ChEBI" id="CHEBI:57856"/>
        <dbReference type="ChEBI" id="CHEBI:59789"/>
        <dbReference type="ChEBI" id="CHEBI:74483"/>
        <dbReference type="ChEBI" id="CHEBI:82748"/>
        <dbReference type="EC" id="2.1.1.176"/>
    </reaction>
</comment>
<comment type="subcellular location">
    <subcellularLocation>
        <location evidence="1">Cytoplasm</location>
    </subcellularLocation>
</comment>
<comment type="similarity">
    <text evidence="1">Belongs to the class I-like SAM-binding methyltransferase superfamily. RsmB/NOP family.</text>
</comment>
<dbReference type="EC" id="2.1.1.176" evidence="1"/>
<dbReference type="EMBL" id="BX936398">
    <property type="protein sequence ID" value="CAH22905.1"/>
    <property type="molecule type" value="Genomic_DNA"/>
</dbReference>
<dbReference type="RefSeq" id="WP_002215705.1">
    <property type="nucleotide sequence ID" value="NZ_CP009712.1"/>
</dbReference>
<dbReference type="SMR" id="Q664V2"/>
<dbReference type="GeneID" id="57974364"/>
<dbReference type="KEGG" id="ypo:BZ17_2920"/>
<dbReference type="KEGG" id="yps:YPTB3667"/>
<dbReference type="PATRIC" id="fig|273123.14.peg.3061"/>
<dbReference type="Proteomes" id="UP000001011">
    <property type="component" value="Chromosome"/>
</dbReference>
<dbReference type="GO" id="GO:0005829">
    <property type="term" value="C:cytosol"/>
    <property type="evidence" value="ECO:0007669"/>
    <property type="project" value="TreeGrafter"/>
</dbReference>
<dbReference type="GO" id="GO:0003723">
    <property type="term" value="F:RNA binding"/>
    <property type="evidence" value="ECO:0007669"/>
    <property type="project" value="UniProtKB-KW"/>
</dbReference>
<dbReference type="GO" id="GO:0009383">
    <property type="term" value="F:rRNA (cytosine-C5-)-methyltransferase activity"/>
    <property type="evidence" value="ECO:0007669"/>
    <property type="project" value="TreeGrafter"/>
</dbReference>
<dbReference type="GO" id="GO:0006355">
    <property type="term" value="P:regulation of DNA-templated transcription"/>
    <property type="evidence" value="ECO:0007669"/>
    <property type="project" value="InterPro"/>
</dbReference>
<dbReference type="GO" id="GO:0070475">
    <property type="term" value="P:rRNA base methylation"/>
    <property type="evidence" value="ECO:0007669"/>
    <property type="project" value="TreeGrafter"/>
</dbReference>
<dbReference type="CDD" id="cd02440">
    <property type="entry name" value="AdoMet_MTases"/>
    <property type="match status" value="1"/>
</dbReference>
<dbReference type="CDD" id="cd00620">
    <property type="entry name" value="Methyltransferase_Sun"/>
    <property type="match status" value="1"/>
</dbReference>
<dbReference type="FunFam" id="1.10.287.730:FF:000001">
    <property type="entry name" value="Ribosomal RNA small subunit methyltransferase B"/>
    <property type="match status" value="1"/>
</dbReference>
<dbReference type="FunFam" id="1.10.940.10:FF:000002">
    <property type="entry name" value="Ribosomal RNA small subunit methyltransferase B"/>
    <property type="match status" value="1"/>
</dbReference>
<dbReference type="FunFam" id="3.30.70.1170:FF:000002">
    <property type="entry name" value="Ribosomal RNA small subunit methyltransferase B"/>
    <property type="match status" value="1"/>
</dbReference>
<dbReference type="FunFam" id="3.40.50.150:FF:000022">
    <property type="entry name" value="Ribosomal RNA small subunit methyltransferase B"/>
    <property type="match status" value="1"/>
</dbReference>
<dbReference type="Gene3D" id="1.10.287.730">
    <property type="entry name" value="Helix hairpin bin"/>
    <property type="match status" value="1"/>
</dbReference>
<dbReference type="Gene3D" id="1.10.940.10">
    <property type="entry name" value="NusB-like"/>
    <property type="match status" value="1"/>
</dbReference>
<dbReference type="Gene3D" id="3.30.70.1170">
    <property type="entry name" value="Sun protein, domain 3"/>
    <property type="match status" value="1"/>
</dbReference>
<dbReference type="Gene3D" id="3.40.50.150">
    <property type="entry name" value="Vaccinia Virus protein VP39"/>
    <property type="match status" value="1"/>
</dbReference>
<dbReference type="HAMAP" id="MF_01856">
    <property type="entry name" value="16SrRNA_methyltr_B"/>
    <property type="match status" value="1"/>
</dbReference>
<dbReference type="InterPro" id="IPR049560">
    <property type="entry name" value="MeTrfase_RsmB-F_NOP2_cat"/>
</dbReference>
<dbReference type="InterPro" id="IPR001678">
    <property type="entry name" value="MeTrfase_RsmB-F_NOP2_dom"/>
</dbReference>
<dbReference type="InterPro" id="IPR035926">
    <property type="entry name" value="NusB-like_sf"/>
</dbReference>
<dbReference type="InterPro" id="IPR006027">
    <property type="entry name" value="NusB_RsmB_TIM44"/>
</dbReference>
<dbReference type="InterPro" id="IPR023267">
    <property type="entry name" value="RCMT"/>
</dbReference>
<dbReference type="InterPro" id="IPR004573">
    <property type="entry name" value="rRNA_ssu_MeTfrase_B"/>
</dbReference>
<dbReference type="InterPro" id="IPR023541">
    <property type="entry name" value="rRNA_ssu_MeTfrase_B_ent"/>
</dbReference>
<dbReference type="InterPro" id="IPR054728">
    <property type="entry name" value="RsmB-like_ferredoxin"/>
</dbReference>
<dbReference type="InterPro" id="IPR048019">
    <property type="entry name" value="RsmB-like_N"/>
</dbReference>
<dbReference type="InterPro" id="IPR018314">
    <property type="entry name" value="RsmB/NOL1/NOP2-like_CS"/>
</dbReference>
<dbReference type="InterPro" id="IPR029063">
    <property type="entry name" value="SAM-dependent_MTases_sf"/>
</dbReference>
<dbReference type="NCBIfam" id="NF008149">
    <property type="entry name" value="PRK10901.1"/>
    <property type="match status" value="1"/>
</dbReference>
<dbReference type="NCBIfam" id="NF011494">
    <property type="entry name" value="PRK14902.1"/>
    <property type="match status" value="1"/>
</dbReference>
<dbReference type="NCBIfam" id="TIGR00563">
    <property type="entry name" value="rsmB"/>
    <property type="match status" value="1"/>
</dbReference>
<dbReference type="PANTHER" id="PTHR22807:SF61">
    <property type="entry name" value="NOL1_NOP2_SUN FAMILY PROTEIN _ ANTITERMINATION NUSB DOMAIN-CONTAINING PROTEIN"/>
    <property type="match status" value="1"/>
</dbReference>
<dbReference type="PANTHER" id="PTHR22807">
    <property type="entry name" value="NOP2 YEAST -RELATED NOL1/NOP2/FMU SUN DOMAIN-CONTAINING"/>
    <property type="match status" value="1"/>
</dbReference>
<dbReference type="Pfam" id="PF01189">
    <property type="entry name" value="Methyltr_RsmB-F"/>
    <property type="match status" value="1"/>
</dbReference>
<dbReference type="Pfam" id="PF01029">
    <property type="entry name" value="NusB"/>
    <property type="match status" value="1"/>
</dbReference>
<dbReference type="Pfam" id="PF22458">
    <property type="entry name" value="RsmF-B_ferredox"/>
    <property type="match status" value="1"/>
</dbReference>
<dbReference type="PRINTS" id="PR02008">
    <property type="entry name" value="RCMTFAMILY"/>
</dbReference>
<dbReference type="SUPFAM" id="SSF48013">
    <property type="entry name" value="NusB-like"/>
    <property type="match status" value="1"/>
</dbReference>
<dbReference type="SUPFAM" id="SSF53335">
    <property type="entry name" value="S-adenosyl-L-methionine-dependent methyltransferases"/>
    <property type="match status" value="1"/>
</dbReference>
<dbReference type="PROSITE" id="PS01153">
    <property type="entry name" value="NOL1_NOP2_SUN"/>
    <property type="match status" value="1"/>
</dbReference>
<dbReference type="PROSITE" id="PS51686">
    <property type="entry name" value="SAM_MT_RSMB_NOP"/>
    <property type="match status" value="1"/>
</dbReference>
<organism>
    <name type="scientific">Yersinia pseudotuberculosis serotype I (strain IP32953)</name>
    <dbReference type="NCBI Taxonomy" id="273123"/>
    <lineage>
        <taxon>Bacteria</taxon>
        <taxon>Pseudomonadati</taxon>
        <taxon>Pseudomonadota</taxon>
        <taxon>Gammaproteobacteria</taxon>
        <taxon>Enterobacterales</taxon>
        <taxon>Yersiniaceae</taxon>
        <taxon>Yersinia</taxon>
    </lineage>
</organism>
<accession>Q664V2</accession>
<proteinExistence type="inferred from homology"/>
<sequence>MKNTYNLRSIAAKAISQVLDQGQSLSAVLPELQKNISDKDRALLQELCFGTLRVLPQLEWCIQQLMARPMTGKQRVFHYLIMVGLYQLIYTRIPPHAALAETVEGATVLKRPQLKGLINGVLRQFQRQQVELLERAVNNDSHYLHPSWLLARIKQAYPAQWQQILDANNQRPPMWLRVNRLHHSRSEYLELLTQADINAEPHPIYRDAVRLITPCAVNHLPGFELGWVTVQDASAQGCVDLLDPQNGEQILDLCAAPGGKTTHILEAAPKAHVLAVDIDEQRLSRVKENLQRLQLQAVVRVGDGRAPDTWCGDQQFDRILLDAPCSATGVIRRHPDIKWLRRDRDISELAQLQSEIIEAIWPKLKHGGVLVYATCSILPEENQQQIAAFLQRHPEAQLTETGTTAAPGKQNLPHPEDGDGFFYAKIIKK</sequence>
<protein>
    <recommendedName>
        <fullName evidence="1">Ribosomal RNA small subunit methyltransferase B</fullName>
        <ecNumber evidence="1">2.1.1.176</ecNumber>
    </recommendedName>
    <alternativeName>
        <fullName evidence="1">16S rRNA m5C967 methyltransferase</fullName>
    </alternativeName>
    <alternativeName>
        <fullName evidence="1">rRNA (cytosine-C(5)-)-methyltransferase RsmB</fullName>
    </alternativeName>
</protein>
<name>RSMB_YERPS</name>
<reference key="1">
    <citation type="journal article" date="2004" name="Proc. Natl. Acad. Sci. U.S.A.">
        <title>Insights into the evolution of Yersinia pestis through whole-genome comparison with Yersinia pseudotuberculosis.</title>
        <authorList>
            <person name="Chain P.S.G."/>
            <person name="Carniel E."/>
            <person name="Larimer F.W."/>
            <person name="Lamerdin J."/>
            <person name="Stoutland P.O."/>
            <person name="Regala W.M."/>
            <person name="Georgescu A.M."/>
            <person name="Vergez L.M."/>
            <person name="Land M.L."/>
            <person name="Motin V.L."/>
            <person name="Brubaker R.R."/>
            <person name="Fowler J."/>
            <person name="Hinnebusch J."/>
            <person name="Marceau M."/>
            <person name="Medigue C."/>
            <person name="Simonet M."/>
            <person name="Chenal-Francisque V."/>
            <person name="Souza B."/>
            <person name="Dacheux D."/>
            <person name="Elliott J.M."/>
            <person name="Derbise A."/>
            <person name="Hauser L.J."/>
            <person name="Garcia E."/>
        </authorList>
    </citation>
    <scope>NUCLEOTIDE SEQUENCE [LARGE SCALE GENOMIC DNA]</scope>
    <source>
        <strain>IP32953</strain>
    </source>
</reference>
<gene>
    <name evidence="1" type="primary">rsmB</name>
    <name evidence="1" type="synonym">sun</name>
    <name type="ordered locus">YPTB3667</name>
</gene>
<evidence type="ECO:0000255" key="1">
    <source>
        <dbReference type="HAMAP-Rule" id="MF_01856"/>
    </source>
</evidence>